<reference key="1">
    <citation type="online journal article" date="1995" name="Plant Gene Register">
        <title>A genomic clone encoding flavanone 3-hydroxylase from Arabidopsis thaliana.</title>
        <authorList>
            <person name="Pelletier M.K."/>
            <person name="Shirley B.W."/>
        </authorList>
        <locator>PGR95-080</locator>
    </citation>
    <scope>NUCLEOTIDE SEQUENCE [GENOMIC DNA]</scope>
    <source>
        <strain>cv. Landsberg erecta</strain>
    </source>
</reference>
<reference key="2">
    <citation type="journal article" date="1998" name="Proc. Natl. Acad. Sci. U.S.A.">
        <title>Knock-out mutants from an En-1 mutagenized Arabidopsis thaliana population generate phenylpropanoid biosynthesis phenotypes.</title>
        <authorList>
            <person name="Wisman E."/>
            <person name="Hartmann U."/>
            <person name="Sagasser M."/>
            <person name="Baumann E."/>
            <person name="Palme K."/>
            <person name="Hahlbrock K."/>
            <person name="Saedler H."/>
            <person name="Weisshaar B."/>
        </authorList>
    </citation>
    <scope>NUCLEOTIDE SEQUENCE [GENOMIC DNA]</scope>
    <scope>MUTANT F3H-1(TT6)</scope>
    <source>
        <strain>cv. Columbia</strain>
        <strain>cv. Landsberg erecta</strain>
    </source>
</reference>
<reference key="3">
    <citation type="journal article" date="2000" name="Nature">
        <title>Sequence and analysis of chromosome 3 of the plant Arabidopsis thaliana.</title>
        <authorList>
            <person name="Salanoubat M."/>
            <person name="Lemcke K."/>
            <person name="Rieger M."/>
            <person name="Ansorge W."/>
            <person name="Unseld M."/>
            <person name="Fartmann B."/>
            <person name="Valle G."/>
            <person name="Bloecker H."/>
            <person name="Perez-Alonso M."/>
            <person name="Obermaier B."/>
            <person name="Delseny M."/>
            <person name="Boutry M."/>
            <person name="Grivell L.A."/>
            <person name="Mache R."/>
            <person name="Puigdomenech P."/>
            <person name="De Simone V."/>
            <person name="Choisne N."/>
            <person name="Artiguenave F."/>
            <person name="Robert C."/>
            <person name="Brottier P."/>
            <person name="Wincker P."/>
            <person name="Cattolico L."/>
            <person name="Weissenbach J."/>
            <person name="Saurin W."/>
            <person name="Quetier F."/>
            <person name="Schaefer M."/>
            <person name="Mueller-Auer S."/>
            <person name="Gabel C."/>
            <person name="Fuchs M."/>
            <person name="Benes V."/>
            <person name="Wurmbach E."/>
            <person name="Drzonek H."/>
            <person name="Erfle H."/>
            <person name="Jordan N."/>
            <person name="Bangert S."/>
            <person name="Wiedelmann R."/>
            <person name="Kranz H."/>
            <person name="Voss H."/>
            <person name="Holland R."/>
            <person name="Brandt P."/>
            <person name="Nyakatura G."/>
            <person name="Vezzi A."/>
            <person name="D'Angelo M."/>
            <person name="Pallavicini A."/>
            <person name="Toppo S."/>
            <person name="Simionati B."/>
            <person name="Conrad A."/>
            <person name="Hornischer K."/>
            <person name="Kauer G."/>
            <person name="Loehnert T.-H."/>
            <person name="Nordsiek G."/>
            <person name="Reichelt J."/>
            <person name="Scharfe M."/>
            <person name="Schoen O."/>
            <person name="Bargues M."/>
            <person name="Terol J."/>
            <person name="Climent J."/>
            <person name="Navarro P."/>
            <person name="Collado C."/>
            <person name="Perez-Perez A."/>
            <person name="Ottenwaelder B."/>
            <person name="Duchemin D."/>
            <person name="Cooke R."/>
            <person name="Laudie M."/>
            <person name="Berger-Llauro C."/>
            <person name="Purnelle B."/>
            <person name="Masuy D."/>
            <person name="de Haan M."/>
            <person name="Maarse A.C."/>
            <person name="Alcaraz J.-P."/>
            <person name="Cottet A."/>
            <person name="Casacuberta E."/>
            <person name="Monfort A."/>
            <person name="Argiriou A."/>
            <person name="Flores M."/>
            <person name="Liguori R."/>
            <person name="Vitale D."/>
            <person name="Mannhaupt G."/>
            <person name="Haase D."/>
            <person name="Schoof H."/>
            <person name="Rudd S."/>
            <person name="Zaccaria P."/>
            <person name="Mewes H.-W."/>
            <person name="Mayer K.F.X."/>
            <person name="Kaul S."/>
            <person name="Town C.D."/>
            <person name="Koo H.L."/>
            <person name="Tallon L.J."/>
            <person name="Jenkins J."/>
            <person name="Rooney T."/>
            <person name="Rizzo M."/>
            <person name="Walts A."/>
            <person name="Utterback T."/>
            <person name="Fujii C.Y."/>
            <person name="Shea T.P."/>
            <person name="Creasy T.H."/>
            <person name="Haas B."/>
            <person name="Maiti R."/>
            <person name="Wu D."/>
            <person name="Peterson J."/>
            <person name="Van Aken S."/>
            <person name="Pai G."/>
            <person name="Militscher J."/>
            <person name="Sellers P."/>
            <person name="Gill J.E."/>
            <person name="Feldblyum T.V."/>
            <person name="Preuss D."/>
            <person name="Lin X."/>
            <person name="Nierman W.C."/>
            <person name="Salzberg S.L."/>
            <person name="White O."/>
            <person name="Venter J.C."/>
            <person name="Fraser C.M."/>
            <person name="Kaneko T."/>
            <person name="Nakamura Y."/>
            <person name="Sato S."/>
            <person name="Kato T."/>
            <person name="Asamizu E."/>
            <person name="Sasamoto S."/>
            <person name="Kimura T."/>
            <person name="Idesawa K."/>
            <person name="Kawashima K."/>
            <person name="Kishida Y."/>
            <person name="Kiyokawa C."/>
            <person name="Kohara M."/>
            <person name="Matsumoto M."/>
            <person name="Matsuno A."/>
            <person name="Muraki A."/>
            <person name="Nakayama S."/>
            <person name="Nakazaki N."/>
            <person name="Shinpo S."/>
            <person name="Takeuchi C."/>
            <person name="Wada T."/>
            <person name="Watanabe A."/>
            <person name="Yamada M."/>
            <person name="Yasuda M."/>
            <person name="Tabata S."/>
        </authorList>
    </citation>
    <scope>NUCLEOTIDE SEQUENCE [LARGE SCALE GENOMIC DNA]</scope>
    <source>
        <strain>cv. Columbia</strain>
    </source>
</reference>
<reference key="4">
    <citation type="journal article" date="2017" name="Plant J.">
        <title>Araport11: a complete reannotation of the Arabidopsis thaliana reference genome.</title>
        <authorList>
            <person name="Cheng C.Y."/>
            <person name="Krishnakumar V."/>
            <person name="Chan A.P."/>
            <person name="Thibaud-Nissen F."/>
            <person name="Schobel S."/>
            <person name="Town C.D."/>
        </authorList>
    </citation>
    <scope>GENOME REANNOTATION</scope>
    <source>
        <strain>cv. Columbia</strain>
    </source>
</reference>
<reference key="5">
    <citation type="journal article" date="2003" name="Science">
        <title>Empirical analysis of transcriptional activity in the Arabidopsis genome.</title>
        <authorList>
            <person name="Yamada K."/>
            <person name="Lim J."/>
            <person name="Dale J.M."/>
            <person name="Chen H."/>
            <person name="Shinn P."/>
            <person name="Palm C.J."/>
            <person name="Southwick A.M."/>
            <person name="Wu H.C."/>
            <person name="Kim C.J."/>
            <person name="Nguyen M."/>
            <person name="Pham P.K."/>
            <person name="Cheuk R.F."/>
            <person name="Karlin-Newmann G."/>
            <person name="Liu S.X."/>
            <person name="Lam B."/>
            <person name="Sakano H."/>
            <person name="Wu T."/>
            <person name="Yu G."/>
            <person name="Miranda M."/>
            <person name="Quach H.L."/>
            <person name="Tripp M."/>
            <person name="Chang C.H."/>
            <person name="Lee J.M."/>
            <person name="Toriumi M.J."/>
            <person name="Chan M.M."/>
            <person name="Tang C.C."/>
            <person name="Onodera C.S."/>
            <person name="Deng J.M."/>
            <person name="Akiyama K."/>
            <person name="Ansari Y."/>
            <person name="Arakawa T."/>
            <person name="Banh J."/>
            <person name="Banno F."/>
            <person name="Bowser L."/>
            <person name="Brooks S.Y."/>
            <person name="Carninci P."/>
            <person name="Chao Q."/>
            <person name="Choy N."/>
            <person name="Enju A."/>
            <person name="Goldsmith A.D."/>
            <person name="Gurjal M."/>
            <person name="Hansen N.F."/>
            <person name="Hayashizaki Y."/>
            <person name="Johnson-Hopson C."/>
            <person name="Hsuan V.W."/>
            <person name="Iida K."/>
            <person name="Karnes M."/>
            <person name="Khan S."/>
            <person name="Koesema E."/>
            <person name="Ishida J."/>
            <person name="Jiang P.X."/>
            <person name="Jones T."/>
            <person name="Kawai J."/>
            <person name="Kamiya A."/>
            <person name="Meyers C."/>
            <person name="Nakajima M."/>
            <person name="Narusaka M."/>
            <person name="Seki M."/>
            <person name="Sakurai T."/>
            <person name="Satou M."/>
            <person name="Tamse R."/>
            <person name="Vaysberg M."/>
            <person name="Wallender E.K."/>
            <person name="Wong C."/>
            <person name="Yamamura Y."/>
            <person name="Yuan S."/>
            <person name="Shinozaki K."/>
            <person name="Davis R.W."/>
            <person name="Theologis A."/>
            <person name="Ecker J.R."/>
        </authorList>
    </citation>
    <scope>NUCLEOTIDE SEQUENCE [LARGE SCALE MRNA]</scope>
    <source>
        <strain>cv. Columbia</strain>
    </source>
</reference>
<reference key="6">
    <citation type="submission" date="2002-03" db="EMBL/GenBank/DDBJ databases">
        <title>Full-length cDNA from Arabidopsis thaliana.</title>
        <authorList>
            <person name="Brover V.V."/>
            <person name="Troukhan M.E."/>
            <person name="Alexandrov N.A."/>
            <person name="Lu Y.-P."/>
            <person name="Flavell R.B."/>
            <person name="Feldmann K.A."/>
        </authorList>
    </citation>
    <scope>NUCLEOTIDE SEQUENCE [LARGE SCALE MRNA]</scope>
</reference>
<reference key="7">
    <citation type="journal article" date="2001" name="Mol. Biol. Evol.">
        <title>Nucleotide sequence variation at two genes of the phenylpropanoid pathway, the FAH1 and F3H genes, in Arabidopsis thaliana.</title>
        <authorList>
            <person name="Aguade M."/>
        </authorList>
    </citation>
    <scope>NUCLEOTIDE SEQUENCE [GENOMIC DNA] OF 15-358</scope>
    <source>
        <strain>cv. Can-0</strain>
        <strain>cv. Cha-0</strain>
        <strain>cv. Col-2</strain>
        <strain>cv. Cvi-0</strain>
        <strain>cv. Gr-5</strain>
        <strain>cv. Ita-0</strain>
        <strain>cv. Kas-1</strain>
        <strain>cv. Kon</strain>
        <strain>cv. La-0</strain>
        <strain>cv. Me-0</strain>
        <strain>cv. Mh-0</strain>
        <strain>cv. Mr-0</strain>
        <strain>cv. Nc-1</strain>
        <strain>cv. Per-1</strain>
        <strain>cv. Ri-0</strain>
        <strain>cv. Rsch-0</strain>
        <strain>cv. Rub-1</strain>
        <strain>cv. Tul-0</strain>
        <strain>cv. Wassilewskija</strain>
        <strain>cv. Yo-1</strain>
        <tissue>Leaf</tissue>
    </source>
</reference>
<reference key="8">
    <citation type="journal article" date="1999" name="Proc. Natl. Acad. Sci. U.S.A.">
        <title>Interactions among enzymes of the Arabidopsis flavonoid biosynthetic pathway.</title>
        <authorList>
            <person name="Burbulis I.E."/>
            <person name="Winkel-Shirley B."/>
        </authorList>
    </citation>
    <scope>INTERACTION</scope>
</reference>
<reference key="9">
    <citation type="journal article" date="2013" name="Plant Physiol. Biochem.">
        <title>The flavonoid biosynthetic pathway in Arabidopsis: Structural and genetic diversity.</title>
        <authorList>
            <person name="Saito K."/>
            <person name="Yonekura-Sakakibara K."/>
            <person name="Nakabayashi R."/>
            <person name="Higashi Y."/>
            <person name="Yamazaki M."/>
            <person name="Tohge T."/>
            <person name="Fernie A.R."/>
        </authorList>
    </citation>
    <scope>REVIEW</scope>
    <scope>NOMENCLATURE</scope>
</reference>
<gene>
    <name type="primary">F3H</name>
    <name type="synonym">TT6</name>
    <name type="ordered locus">At3g51240</name>
    <name type="ORF">F24M12.280</name>
</gene>
<organism>
    <name type="scientific">Arabidopsis thaliana</name>
    <name type="common">Mouse-ear cress</name>
    <dbReference type="NCBI Taxonomy" id="3702"/>
    <lineage>
        <taxon>Eukaryota</taxon>
        <taxon>Viridiplantae</taxon>
        <taxon>Streptophyta</taxon>
        <taxon>Embryophyta</taxon>
        <taxon>Tracheophyta</taxon>
        <taxon>Spermatophyta</taxon>
        <taxon>Magnoliopsida</taxon>
        <taxon>eudicotyledons</taxon>
        <taxon>Gunneridae</taxon>
        <taxon>Pentapetalae</taxon>
        <taxon>rosids</taxon>
        <taxon>malvids</taxon>
        <taxon>Brassicales</taxon>
        <taxon>Brassicaceae</taxon>
        <taxon>Camelineae</taxon>
        <taxon>Arabidopsis</taxon>
    </lineage>
</organism>
<feature type="chain" id="PRO_0000067283" description="Naringenin,2-oxoglutarate 3-dioxygenase">
    <location>
        <begin position="1"/>
        <end position="358"/>
    </location>
</feature>
<feature type="domain" description="Fe2OG dioxygenase" evidence="2">
    <location>
        <begin position="190"/>
        <end position="294"/>
    </location>
</feature>
<feature type="binding site" evidence="2">
    <location>
        <position position="217"/>
    </location>
    <ligand>
        <name>Fe cation</name>
        <dbReference type="ChEBI" id="CHEBI:24875"/>
    </ligand>
</feature>
<feature type="binding site" evidence="2">
    <location>
        <position position="219"/>
    </location>
    <ligand>
        <name>Fe cation</name>
        <dbReference type="ChEBI" id="CHEBI:24875"/>
    </ligand>
</feature>
<feature type="binding site" evidence="2">
    <location>
        <position position="275"/>
    </location>
    <ligand>
        <name>Fe cation</name>
        <dbReference type="ChEBI" id="CHEBI:24875"/>
    </ligand>
</feature>
<feature type="binding site" evidence="2">
    <location>
        <position position="285"/>
    </location>
    <ligand>
        <name>2-oxoglutarate</name>
        <dbReference type="ChEBI" id="CHEBI:16810"/>
    </ligand>
</feature>
<feature type="sequence variant" description="In strain: cv. Ri-0, cv. Tul-0 and cv. Yo-1.">
    <original>V</original>
    <variation>L</variation>
    <location>
        <position position="77"/>
    </location>
</feature>
<feature type="sequence variant" description="In strain: cv. Cha-0, cv. Con, cv. Cvi-0, cv. Gr-5, cv. Ita-0, cv. Kas-1, cv. La-0, cv. Ler, cv. Me-0, cv. Mh-0, cv. Nc-1, cv. Per-1, cv. Ri-0, cv. Rsch-0, cv. Rub-1, cv. Tul-0, cv. Ws-0 and cv. Yo-1.">
    <original>D</original>
    <variation>N</variation>
    <location>
        <position position="148"/>
    </location>
</feature>
<feature type="sequence variant" description="In strain: cv. Me-0, cv. Mh-0, cv. Per-1 and cv. Ws-0.">
    <original>E</original>
    <variation>K</variation>
    <location>
        <position position="158"/>
    </location>
</feature>
<feature type="sequence variant" description="In strain: cv. Cha-0, cv. Con, cv. Cvi-0, cv. Gr-5, cv. Ita-0, cv. Kas-1, cv. La-0, cv. Ler, cv. Me-0, cv. Mh-0, cv. Nc-1, cv. Per-1, cv. Ri-0, cv. Rsch-0, cv. Rub-1, cv. Tul-0, cv. Ws-0 and cv. Yo-1.">
    <original>D</original>
    <variation>A</variation>
    <location>
        <position position="350"/>
    </location>
</feature>
<feature type="sequence variant" description="In strain: cv. Me-0.">
    <original>D</original>
    <variation>N</variation>
    <location>
        <position position="354"/>
    </location>
</feature>
<feature type="mutagenesis site" description="In f3h-1(tt6); reduced seed pigmentation.">
    <location>
        <begin position="248"/>
        <end position="358"/>
    </location>
</feature>
<dbReference type="EC" id="1.14.11.9" evidence="1"/>
<dbReference type="EMBL" id="U33932">
    <property type="protein sequence ID" value="AAC49176.1"/>
    <property type="molecule type" value="Genomic_DNA"/>
</dbReference>
<dbReference type="EMBL" id="AF064064">
    <property type="protein sequence ID" value="AAC68584.1"/>
    <property type="molecule type" value="Genomic_DNA"/>
</dbReference>
<dbReference type="EMBL" id="AF064065">
    <property type="protein sequence ID" value="AAC68585.1"/>
    <property type="molecule type" value="Genomic_DNA"/>
</dbReference>
<dbReference type="EMBL" id="AL132980">
    <property type="protein sequence ID" value="CAB62646.1"/>
    <property type="molecule type" value="Genomic_DNA"/>
</dbReference>
<dbReference type="EMBL" id="CP002686">
    <property type="protein sequence ID" value="AEE78766.1"/>
    <property type="molecule type" value="Genomic_DNA"/>
</dbReference>
<dbReference type="EMBL" id="AF428335">
    <property type="protein sequence ID" value="AAL16265.1"/>
    <property type="molecule type" value="mRNA"/>
</dbReference>
<dbReference type="EMBL" id="AY058886">
    <property type="protein sequence ID" value="AAL24272.1"/>
    <property type="molecule type" value="mRNA"/>
</dbReference>
<dbReference type="EMBL" id="AY116957">
    <property type="protein sequence ID" value="AAM51591.1"/>
    <property type="molecule type" value="mRNA"/>
</dbReference>
<dbReference type="EMBL" id="AY087559">
    <property type="protein sequence ID" value="AAM65101.1"/>
    <property type="molecule type" value="mRNA"/>
</dbReference>
<dbReference type="EMBL" id="AJ295606">
    <property type="protein sequence ID" value="CAC26961.1"/>
    <property type="molecule type" value="Genomic_DNA"/>
</dbReference>
<dbReference type="EMBL" id="AJ295604">
    <property type="protein sequence ID" value="CAC26959.1"/>
    <property type="molecule type" value="Genomic_DNA"/>
</dbReference>
<dbReference type="EMBL" id="AJ295605">
    <property type="protein sequence ID" value="CAC26960.1"/>
    <property type="molecule type" value="Genomic_DNA"/>
</dbReference>
<dbReference type="EMBL" id="AJ295603">
    <property type="protein sequence ID" value="CAC26958.1"/>
    <property type="molecule type" value="Genomic_DNA"/>
</dbReference>
<dbReference type="EMBL" id="AJ295587">
    <property type="protein sequence ID" value="CAC26942.1"/>
    <property type="molecule type" value="Genomic_DNA"/>
</dbReference>
<dbReference type="EMBL" id="AJ295588">
    <property type="protein sequence ID" value="CAC26943.1"/>
    <property type="molecule type" value="Genomic_DNA"/>
</dbReference>
<dbReference type="EMBL" id="AJ295589">
    <property type="protein sequence ID" value="CAC26944.1"/>
    <property type="molecule type" value="Genomic_DNA"/>
</dbReference>
<dbReference type="EMBL" id="AJ295590">
    <property type="protein sequence ID" value="CAC26945.1"/>
    <property type="molecule type" value="Genomic_DNA"/>
</dbReference>
<dbReference type="EMBL" id="AJ295591">
    <property type="protein sequence ID" value="CAC26946.1"/>
    <property type="molecule type" value="Genomic_DNA"/>
</dbReference>
<dbReference type="EMBL" id="AJ295592">
    <property type="protein sequence ID" value="CAC26947.1"/>
    <property type="molecule type" value="Genomic_DNA"/>
</dbReference>
<dbReference type="EMBL" id="AJ295593">
    <property type="protein sequence ID" value="CAC26948.1"/>
    <property type="molecule type" value="Genomic_DNA"/>
</dbReference>
<dbReference type="EMBL" id="AJ295601">
    <property type="protein sequence ID" value="CAC26956.1"/>
    <property type="molecule type" value="Genomic_DNA"/>
</dbReference>
<dbReference type="EMBL" id="AJ295602">
    <property type="protein sequence ID" value="CAC26957.1"/>
    <property type="molecule type" value="Genomic_DNA"/>
</dbReference>
<dbReference type="EMBL" id="AJ295596">
    <property type="protein sequence ID" value="CAC26951.1"/>
    <property type="molecule type" value="Genomic_DNA"/>
</dbReference>
<dbReference type="EMBL" id="AJ295594">
    <property type="protein sequence ID" value="CAC26949.1"/>
    <property type="molecule type" value="Genomic_DNA"/>
</dbReference>
<dbReference type="EMBL" id="AJ295595">
    <property type="protein sequence ID" value="CAC26950.1"/>
    <property type="molecule type" value="Genomic_DNA"/>
</dbReference>
<dbReference type="EMBL" id="AJ295599">
    <property type="protein sequence ID" value="CAC26954.1"/>
    <property type="molecule type" value="Genomic_DNA"/>
</dbReference>
<dbReference type="EMBL" id="AJ295597">
    <property type="protein sequence ID" value="CAC26952.1"/>
    <property type="molecule type" value="Genomic_DNA"/>
</dbReference>
<dbReference type="EMBL" id="AJ295598">
    <property type="protein sequence ID" value="CAC26953.1"/>
    <property type="molecule type" value="Genomic_DNA"/>
</dbReference>
<dbReference type="EMBL" id="AJ295600">
    <property type="protein sequence ID" value="CAC26955.1"/>
    <property type="molecule type" value="Genomic_DNA"/>
</dbReference>
<dbReference type="PIR" id="T45755">
    <property type="entry name" value="T45755"/>
</dbReference>
<dbReference type="RefSeq" id="NP_190692.1">
    <molecule id="Q9S818-1"/>
    <property type="nucleotide sequence ID" value="NM_114983.3"/>
</dbReference>
<dbReference type="SMR" id="Q9S818"/>
<dbReference type="BioGRID" id="9605">
    <property type="interactions" value="2"/>
</dbReference>
<dbReference type="FunCoup" id="Q9S818">
    <property type="interactions" value="27"/>
</dbReference>
<dbReference type="IntAct" id="Q9S818">
    <property type="interactions" value="3"/>
</dbReference>
<dbReference type="STRING" id="3702.Q9S818"/>
<dbReference type="PaxDb" id="3702-AT3G51240.1"/>
<dbReference type="ProteomicsDB" id="230032">
    <molecule id="Q9S818-1"/>
</dbReference>
<dbReference type="EnsemblPlants" id="AT3G51240.1">
    <molecule id="Q9S818-1"/>
    <property type="protein sequence ID" value="AT3G51240.1"/>
    <property type="gene ID" value="AT3G51240"/>
</dbReference>
<dbReference type="GeneID" id="824287"/>
<dbReference type="Gramene" id="AT3G51240.1">
    <molecule id="Q9S818-1"/>
    <property type="protein sequence ID" value="AT3G51240.1"/>
    <property type="gene ID" value="AT3G51240"/>
</dbReference>
<dbReference type="KEGG" id="ath:AT3G51240"/>
<dbReference type="Araport" id="AT3G51240"/>
<dbReference type="TAIR" id="AT3G51240">
    <property type="gene designation" value="F3H"/>
</dbReference>
<dbReference type="eggNOG" id="KOG0143">
    <property type="taxonomic scope" value="Eukaryota"/>
</dbReference>
<dbReference type="HOGENOM" id="CLU_010119_16_3_1"/>
<dbReference type="InParanoid" id="Q9S818"/>
<dbReference type="OMA" id="PISCGKW"/>
<dbReference type="OrthoDB" id="288590at2759"/>
<dbReference type="PhylomeDB" id="Q9S818"/>
<dbReference type="BioCyc" id="ARA:AT3G51240-MONOMER"/>
<dbReference type="BioCyc" id="MetaCyc:AT3G51240-MONOMER"/>
<dbReference type="UniPathway" id="UPA00154"/>
<dbReference type="PRO" id="PR:Q9S818"/>
<dbReference type="Proteomes" id="UP000006548">
    <property type="component" value="Chromosome 3"/>
</dbReference>
<dbReference type="ExpressionAtlas" id="Q9S818">
    <property type="expression patterns" value="baseline and differential"/>
</dbReference>
<dbReference type="GO" id="GO:0005524">
    <property type="term" value="F:ATP binding"/>
    <property type="evidence" value="ECO:0007669"/>
    <property type="project" value="UniProtKB-KW"/>
</dbReference>
<dbReference type="GO" id="GO:0045486">
    <property type="term" value="F:flavanone 3-dioxygenase activity"/>
    <property type="evidence" value="ECO:0000314"/>
    <property type="project" value="TAIR"/>
</dbReference>
<dbReference type="GO" id="GO:0031418">
    <property type="term" value="F:L-ascorbic acid binding"/>
    <property type="evidence" value="ECO:0007669"/>
    <property type="project" value="UniProtKB-KW"/>
</dbReference>
<dbReference type="GO" id="GO:0046872">
    <property type="term" value="F:metal ion binding"/>
    <property type="evidence" value="ECO:0007669"/>
    <property type="project" value="UniProtKB-KW"/>
</dbReference>
<dbReference type="GO" id="GO:0009813">
    <property type="term" value="P:flavonoid biosynthetic process"/>
    <property type="evidence" value="ECO:0000314"/>
    <property type="project" value="TAIR"/>
</dbReference>
<dbReference type="GO" id="GO:0010224">
    <property type="term" value="P:response to UV-B"/>
    <property type="evidence" value="ECO:0000315"/>
    <property type="project" value="TAIR"/>
</dbReference>
<dbReference type="FunFam" id="2.60.120.330:FF:000016">
    <property type="entry name" value="Naringenin,2-oxoglutarate 3-dioxygenase"/>
    <property type="match status" value="1"/>
</dbReference>
<dbReference type="Gene3D" id="2.60.120.330">
    <property type="entry name" value="B-lactam Antibiotic, Isopenicillin N Synthase, Chain"/>
    <property type="match status" value="1"/>
</dbReference>
<dbReference type="InterPro" id="IPR026992">
    <property type="entry name" value="DIOX_N"/>
</dbReference>
<dbReference type="InterPro" id="IPR044861">
    <property type="entry name" value="IPNS-like_FE2OG_OXY"/>
</dbReference>
<dbReference type="InterPro" id="IPR027443">
    <property type="entry name" value="IPNS-like_sf"/>
</dbReference>
<dbReference type="InterPro" id="IPR005123">
    <property type="entry name" value="Oxoglu/Fe-dep_dioxygenase_dom"/>
</dbReference>
<dbReference type="InterPro" id="IPR050295">
    <property type="entry name" value="Plant_2OG-oxidoreductases"/>
</dbReference>
<dbReference type="PANTHER" id="PTHR47991">
    <property type="entry name" value="OXOGLUTARATE/IRON-DEPENDENT DIOXYGENASE"/>
    <property type="match status" value="1"/>
</dbReference>
<dbReference type="Pfam" id="PF03171">
    <property type="entry name" value="2OG-FeII_Oxy"/>
    <property type="match status" value="1"/>
</dbReference>
<dbReference type="Pfam" id="PF14226">
    <property type="entry name" value="DIOX_N"/>
    <property type="match status" value="1"/>
</dbReference>
<dbReference type="SUPFAM" id="SSF51197">
    <property type="entry name" value="Clavaminate synthase-like"/>
    <property type="match status" value="1"/>
</dbReference>
<dbReference type="PROSITE" id="PS51471">
    <property type="entry name" value="FE2OG_OXY"/>
    <property type="match status" value="1"/>
</dbReference>
<keyword id="KW-0025">Alternative splicing</keyword>
<keyword id="KW-0067">ATP-binding</keyword>
<keyword id="KW-0223">Dioxygenase</keyword>
<keyword id="KW-0284">Flavonoid biosynthesis</keyword>
<keyword id="KW-0408">Iron</keyword>
<keyword id="KW-0479">Metal-binding</keyword>
<keyword id="KW-0547">Nucleotide-binding</keyword>
<keyword id="KW-0560">Oxidoreductase</keyword>
<keyword id="KW-1185">Reference proteome</keyword>
<keyword id="KW-0847">Vitamin C</keyword>
<name>FL3H_ARATH</name>
<proteinExistence type="evidence at protein level"/>
<sequence length="358" mass="40276">MAPGTLTELAGESKLNSKFVRDEDERPKVAYNVFSDEIPVISLAGIDDVDGKRGEICRQIVEACENWGIFQVVDHGVDTNLVADMTRLARDFFALPPEDKLRFDMSGGKKGGFIVSSHLQGEAVQDWREIVTYFSYPVRNRDYSRWPDKPEGWVKVTEEYSERLMSLACKLLEVLSEAMGLEKESLTNACVDMDQKIVVNYYPKCPQPDLTLGLKRHTDPGTITLLLQDQVGGLQATRDNGKTWITVQPVEGAFVVNLGDHGHFLSNGRFKNADHQAVVNSNSSRLSIATFQNPAPDATVYPLKVREGEKAILEEPITFAEMYKRKMGRDLELARLKKLAKEERDHKEVDKPVDQIFA</sequence>
<comment type="function">
    <text>Catalyzes the 3-beta-hydroxylation of 2S-flavanones to 2R,3R-dihydroflavonols which are intermediates in the biosynthesis of flavonols, anthocyanidins, catechins and proanthocyanidins in plants.</text>
</comment>
<comment type="catalytic activity">
    <reaction evidence="1">
        <text>a (2S)-flavan-4-one + 2-oxoglutarate + O2 = a (2R,3R)-dihydroflavonol + succinate + CO2</text>
        <dbReference type="Rhea" id="RHEA:18621"/>
        <dbReference type="ChEBI" id="CHEBI:15379"/>
        <dbReference type="ChEBI" id="CHEBI:16526"/>
        <dbReference type="ChEBI" id="CHEBI:16810"/>
        <dbReference type="ChEBI" id="CHEBI:30031"/>
        <dbReference type="ChEBI" id="CHEBI:138188"/>
        <dbReference type="ChEBI" id="CHEBI:140377"/>
        <dbReference type="EC" id="1.14.11.9"/>
    </reaction>
</comment>
<comment type="cofactor">
    <cofactor evidence="2">
        <name>Fe(2+)</name>
        <dbReference type="ChEBI" id="CHEBI:29033"/>
    </cofactor>
    <text evidence="2">Binds 1 Fe(2+) ion per subunit.</text>
</comment>
<comment type="cofactor">
    <cofactor>
        <name>L-ascorbate</name>
        <dbReference type="ChEBI" id="CHEBI:38290"/>
    </cofactor>
</comment>
<comment type="pathway">
    <text>Secondary metabolite biosynthesis; flavonoid biosynthesis.</text>
</comment>
<comment type="subunit">
    <text evidence="3">Interacts with Dihydroflavonol-4-reductase (TT3), chalcone synthase (TT4) and chalcone isomerase (TT5) to form a flavonoid enzyme complex.</text>
</comment>
<comment type="alternative products">
    <event type="alternative splicing"/>
    <isoform>
        <id>Q9S818-1</id>
        <name>1</name>
        <sequence type="displayed"/>
    </isoform>
    <text>A number of isoforms are produced. According to EST sequences.</text>
</comment>
<comment type="similarity">
    <text evidence="4">Belongs to the iron/ascorbate-dependent oxidoreductase family.</text>
</comment>
<accession>Q9S818</accession>
<accession>Q38877</accession>
<accession>Q9C526</accession>
<accession>Q9C528</accession>
<accession>Q9C530</accession>
<accession>Q9C563</accession>
<accession>Q9C5V7</accession>
<evidence type="ECO:0000250" key="1">
    <source>
        <dbReference type="UniProtKB" id="Q7XZQ7"/>
    </source>
</evidence>
<evidence type="ECO:0000255" key="2">
    <source>
        <dbReference type="PROSITE-ProRule" id="PRU00805"/>
    </source>
</evidence>
<evidence type="ECO:0000269" key="3">
    <source>
    </source>
</evidence>
<evidence type="ECO:0000305" key="4"/>
<protein>
    <recommendedName>
        <fullName>Naringenin,2-oxoglutarate 3-dioxygenase</fullName>
        <shortName>Naringenin 3-dioxygenase</shortName>
        <ecNumber evidence="1">1.14.11.9</ecNumber>
    </recommendedName>
    <alternativeName>
        <fullName>F3H</fullName>
    </alternativeName>
    <alternativeName>
        <fullName>Flavanone 3-hydroxylase</fullName>
    </alternativeName>
    <alternativeName>
        <fullName>Protein TRANSPARENT TESTA 6</fullName>
    </alternativeName>
</protein>